<protein>
    <recommendedName>
        <fullName>Putative uncharacterized protein YLR415C, mitochondrial</fullName>
    </recommendedName>
</protein>
<sequence length="112" mass="12346">MYLSAQLMRTVTASHLTLRALSTPPLFQHRQIAAVEWCGTTRPGLARQKRTQHASSVISKSGVLSAKPSSVFLALLAGKLAEKYIYARMLLFHVSVVNECPVVFHSGPVVWK</sequence>
<organism>
    <name type="scientific">Saccharomyces cerevisiae (strain ATCC 204508 / S288c)</name>
    <name type="common">Baker's yeast</name>
    <dbReference type="NCBI Taxonomy" id="559292"/>
    <lineage>
        <taxon>Eukaryota</taxon>
        <taxon>Fungi</taxon>
        <taxon>Dikarya</taxon>
        <taxon>Ascomycota</taxon>
        <taxon>Saccharomycotina</taxon>
        <taxon>Saccharomycetes</taxon>
        <taxon>Saccharomycetales</taxon>
        <taxon>Saccharomycetaceae</taxon>
        <taxon>Saccharomyces</taxon>
    </lineage>
</organism>
<dbReference type="EMBL" id="U20162">
    <property type="protein sequence ID" value="AAB67501.1"/>
    <property type="molecule type" value="Genomic_DNA"/>
</dbReference>
<dbReference type="EMBL" id="BK006945">
    <property type="protein sequence ID" value="DAA09718.1"/>
    <property type="molecule type" value="Genomic_DNA"/>
</dbReference>
<dbReference type="PIR" id="S69318">
    <property type="entry name" value="S69318"/>
</dbReference>
<dbReference type="RefSeq" id="NP_013519.1">
    <property type="nucleotide sequence ID" value="NM_001182303.1"/>
</dbReference>
<dbReference type="BioGRID" id="31674">
    <property type="interactions" value="101"/>
</dbReference>
<dbReference type="DIP" id="DIP-5441N"/>
<dbReference type="FunCoup" id="O13578">
    <property type="interactions" value="34"/>
</dbReference>
<dbReference type="IntAct" id="O13578">
    <property type="interactions" value="2"/>
</dbReference>
<dbReference type="PaxDb" id="4932-YLR415C"/>
<dbReference type="EnsemblFungi" id="YLR415C_mRNA">
    <property type="protein sequence ID" value="YLR415C"/>
    <property type="gene ID" value="YLR415C"/>
</dbReference>
<dbReference type="GeneID" id="851133"/>
<dbReference type="KEGG" id="sce:YLR415C"/>
<dbReference type="AGR" id="SGD:S000004407"/>
<dbReference type="SGD" id="S000004407">
    <property type="gene designation" value="YLR415C"/>
</dbReference>
<dbReference type="VEuPathDB" id="FungiDB:YLR415C"/>
<dbReference type="HOGENOM" id="CLU_2238716_0_0_1"/>
<dbReference type="InParanoid" id="O13578"/>
<dbReference type="OrthoDB" id="10276117at2759"/>
<dbReference type="BioCyc" id="YEAST:G3O-32477-MONOMER"/>
<dbReference type="BioGRID-ORCS" id="851133">
    <property type="hits" value="1 hit in 10 CRISPR screens"/>
</dbReference>
<dbReference type="PRO" id="PR:O13578"/>
<dbReference type="Proteomes" id="UP000002311">
    <property type="component" value="Chromosome XII"/>
</dbReference>
<dbReference type="RNAct" id="O13578">
    <property type="molecule type" value="protein"/>
</dbReference>
<dbReference type="GO" id="GO:0005739">
    <property type="term" value="C:mitochondrion"/>
    <property type="evidence" value="ECO:0007669"/>
    <property type="project" value="UniProtKB-SubCell"/>
</dbReference>
<gene>
    <name type="ordered locus">YLR415C</name>
</gene>
<proteinExistence type="predicted"/>
<feature type="transit peptide" description="Mitochondrion" evidence="1">
    <location>
        <begin position="1"/>
        <end position="21"/>
    </location>
</feature>
<feature type="chain" id="PRO_0000247258" description="Putative uncharacterized protein YLR415C, mitochondrial">
    <location>
        <begin position="22"/>
        <end position="112"/>
    </location>
</feature>
<name>YL415_YEAST</name>
<evidence type="ECO:0000255" key="1"/>
<evidence type="ECO:0000305" key="2"/>
<comment type="subcellular location">
    <subcellularLocation>
        <location evidence="2">Mitochondrion</location>
    </subcellularLocation>
</comment>
<keyword id="KW-0496">Mitochondrion</keyword>
<keyword id="KW-1185">Reference proteome</keyword>
<keyword id="KW-0809">Transit peptide</keyword>
<reference key="1">
    <citation type="journal article" date="1997" name="Nature">
        <title>The nucleotide sequence of Saccharomyces cerevisiae chromosome XII.</title>
        <authorList>
            <person name="Johnston M."/>
            <person name="Hillier L.W."/>
            <person name="Riles L."/>
            <person name="Albermann K."/>
            <person name="Andre B."/>
            <person name="Ansorge W."/>
            <person name="Benes V."/>
            <person name="Brueckner M."/>
            <person name="Delius H."/>
            <person name="Dubois E."/>
            <person name="Duesterhoeft A."/>
            <person name="Entian K.-D."/>
            <person name="Floeth M."/>
            <person name="Goffeau A."/>
            <person name="Hebling U."/>
            <person name="Heumann K."/>
            <person name="Heuss-Neitzel D."/>
            <person name="Hilbert H."/>
            <person name="Hilger F."/>
            <person name="Kleine K."/>
            <person name="Koetter P."/>
            <person name="Louis E.J."/>
            <person name="Messenguy F."/>
            <person name="Mewes H.-W."/>
            <person name="Miosga T."/>
            <person name="Moestl D."/>
            <person name="Mueller-Auer S."/>
            <person name="Nentwich U."/>
            <person name="Obermaier B."/>
            <person name="Piravandi E."/>
            <person name="Pohl T.M."/>
            <person name="Portetelle D."/>
            <person name="Purnelle B."/>
            <person name="Rechmann S."/>
            <person name="Rieger M."/>
            <person name="Rinke M."/>
            <person name="Rose M."/>
            <person name="Scharfe M."/>
            <person name="Scherens B."/>
            <person name="Scholler P."/>
            <person name="Schwager C."/>
            <person name="Schwarz S."/>
            <person name="Underwood A.P."/>
            <person name="Urrestarazu L.A."/>
            <person name="Vandenbol M."/>
            <person name="Verhasselt P."/>
            <person name="Vierendeels F."/>
            <person name="Voet M."/>
            <person name="Volckaert G."/>
            <person name="Voss H."/>
            <person name="Wambutt R."/>
            <person name="Wedler E."/>
            <person name="Wedler H."/>
            <person name="Zimmermann F.K."/>
            <person name="Zollner A."/>
            <person name="Hani J."/>
            <person name="Hoheisel J.D."/>
        </authorList>
    </citation>
    <scope>NUCLEOTIDE SEQUENCE [LARGE SCALE GENOMIC DNA]</scope>
    <source>
        <strain>ATCC 204508 / S288c</strain>
    </source>
</reference>
<reference key="2">
    <citation type="journal article" date="2014" name="G3 (Bethesda)">
        <title>The reference genome sequence of Saccharomyces cerevisiae: Then and now.</title>
        <authorList>
            <person name="Engel S.R."/>
            <person name="Dietrich F.S."/>
            <person name="Fisk D.G."/>
            <person name="Binkley G."/>
            <person name="Balakrishnan R."/>
            <person name="Costanzo M.C."/>
            <person name="Dwight S.S."/>
            <person name="Hitz B.C."/>
            <person name="Karra K."/>
            <person name="Nash R.S."/>
            <person name="Weng S."/>
            <person name="Wong E.D."/>
            <person name="Lloyd P."/>
            <person name="Skrzypek M.S."/>
            <person name="Miyasato S.R."/>
            <person name="Simison M."/>
            <person name="Cherry J.M."/>
        </authorList>
    </citation>
    <scope>GENOME REANNOTATION</scope>
    <source>
        <strain>ATCC 204508 / S288c</strain>
    </source>
</reference>
<accession>O13578</accession>
<accession>D6VZ52</accession>